<name>MTBP_BPPHT</name>
<organism>
    <name type="scientific">Bacillus phage phi3T</name>
    <name type="common">Bacteriophage phi-3T</name>
    <dbReference type="NCBI Taxonomy" id="10736"/>
    <lineage>
        <taxon>Viruses</taxon>
        <taxon>Duplodnaviria</taxon>
        <taxon>Heunggongvirae</taxon>
        <taxon>Uroviricota</taxon>
        <taxon>Caudoviricetes</taxon>
        <taxon>Spbetavirus</taxon>
    </lineage>
</organism>
<protein>
    <recommendedName>
        <fullName evidence="3">Orphan methyltransferase M.Phi3TI</fullName>
        <shortName evidence="3">M.Phi3TI</shortName>
        <ecNumber>2.1.1.37</ecNumber>
    </recommendedName>
    <alternativeName>
        <fullName>Cytosine-specific methyltransferase Phi3TI</fullName>
    </alternativeName>
    <alternativeName>
        <fullName>Modification methylase Phi3TI</fullName>
    </alternativeName>
</protein>
<dbReference type="EC" id="2.1.1.37"/>
<dbReference type="EMBL" id="M13488">
    <property type="protein sequence ID" value="AAA32352.1"/>
    <property type="molecule type" value="Genomic_DNA"/>
</dbReference>
<dbReference type="PIR" id="A24465">
    <property type="entry name" value="CTBPPT"/>
</dbReference>
<dbReference type="SMR" id="P68586"/>
<dbReference type="REBASE" id="2633">
    <property type="entry name" value="M.Phi3TI"/>
</dbReference>
<dbReference type="PRO" id="PR:P68586"/>
<dbReference type="GO" id="GO:0003886">
    <property type="term" value="F:DNA (cytosine-5-)-methyltransferase activity"/>
    <property type="evidence" value="ECO:0007669"/>
    <property type="project" value="UniProtKB-EC"/>
</dbReference>
<dbReference type="GO" id="GO:0003677">
    <property type="term" value="F:DNA binding"/>
    <property type="evidence" value="ECO:0007669"/>
    <property type="project" value="UniProtKB-KW"/>
</dbReference>
<dbReference type="GO" id="GO:0032259">
    <property type="term" value="P:methylation"/>
    <property type="evidence" value="ECO:0007669"/>
    <property type="project" value="UniProtKB-KW"/>
</dbReference>
<dbReference type="GO" id="GO:0099018">
    <property type="term" value="P:symbiont-mediated evasion of host restriction-modification system"/>
    <property type="evidence" value="ECO:0007669"/>
    <property type="project" value="UniProtKB-KW"/>
</dbReference>
<dbReference type="GO" id="GO:0052170">
    <property type="term" value="P:symbiont-mediated suppression of host innate immune response"/>
    <property type="evidence" value="ECO:0007669"/>
    <property type="project" value="UniProtKB-KW"/>
</dbReference>
<dbReference type="CDD" id="cd00315">
    <property type="entry name" value="Cyt_C5_DNA_methylase"/>
    <property type="match status" value="1"/>
</dbReference>
<dbReference type="Gene3D" id="3.90.120.10">
    <property type="entry name" value="DNA Methylase, subunit A, domain 2"/>
    <property type="match status" value="1"/>
</dbReference>
<dbReference type="Gene3D" id="3.40.50.150">
    <property type="entry name" value="Vaccinia Virus protein VP39"/>
    <property type="match status" value="1"/>
</dbReference>
<dbReference type="InterPro" id="IPR050750">
    <property type="entry name" value="C5-MTase"/>
</dbReference>
<dbReference type="InterPro" id="IPR018117">
    <property type="entry name" value="C5_DNA_meth_AS"/>
</dbReference>
<dbReference type="InterPro" id="IPR001525">
    <property type="entry name" value="C5_MeTfrase"/>
</dbReference>
<dbReference type="InterPro" id="IPR031303">
    <property type="entry name" value="C5_meth_CS"/>
</dbReference>
<dbReference type="InterPro" id="IPR029063">
    <property type="entry name" value="SAM-dependent_MTases_sf"/>
</dbReference>
<dbReference type="NCBIfam" id="TIGR00675">
    <property type="entry name" value="dcm"/>
    <property type="match status" value="1"/>
</dbReference>
<dbReference type="PANTHER" id="PTHR46098">
    <property type="entry name" value="TRNA (CYTOSINE(38)-C(5))-METHYLTRANSFERASE"/>
    <property type="match status" value="1"/>
</dbReference>
<dbReference type="PANTHER" id="PTHR46098:SF1">
    <property type="entry name" value="TRNA (CYTOSINE(38)-C(5))-METHYLTRANSFERASE"/>
    <property type="match status" value="1"/>
</dbReference>
<dbReference type="Pfam" id="PF00145">
    <property type="entry name" value="DNA_methylase"/>
    <property type="match status" value="2"/>
</dbReference>
<dbReference type="PRINTS" id="PR00105">
    <property type="entry name" value="C5METTRFRASE"/>
</dbReference>
<dbReference type="SUPFAM" id="SSF53335">
    <property type="entry name" value="S-adenosyl-L-methionine-dependent methyltransferases"/>
    <property type="match status" value="1"/>
</dbReference>
<dbReference type="PROSITE" id="PS00094">
    <property type="entry name" value="C5_MTASE_1"/>
    <property type="match status" value="1"/>
</dbReference>
<dbReference type="PROSITE" id="PS00095">
    <property type="entry name" value="C5_MTASE_2"/>
    <property type="match status" value="1"/>
</dbReference>
<dbReference type="PROSITE" id="PS51679">
    <property type="entry name" value="SAM_MT_C5"/>
    <property type="match status" value="1"/>
</dbReference>
<keyword id="KW-0238">DNA-binding</keyword>
<keyword id="KW-0945">Host-virus interaction</keyword>
<keyword id="KW-1090">Inhibition of host innate immune response by virus</keyword>
<keyword id="KW-0489">Methyltransferase</keyword>
<keyword id="KW-1258">Restriction-modification system evasion by virus</keyword>
<keyword id="KW-0949">S-adenosyl-L-methionine</keyword>
<keyword id="KW-0808">Transferase</keyword>
<keyword id="KW-0899">Viral immunoevasion</keyword>
<evidence type="ECO:0000255" key="1">
    <source>
        <dbReference type="PROSITE-ProRule" id="PRU01016"/>
    </source>
</evidence>
<evidence type="ECO:0000255" key="2">
    <source>
        <dbReference type="PROSITE-ProRule" id="PRU10018"/>
    </source>
</evidence>
<evidence type="ECO:0000303" key="3">
    <source>
    </source>
</evidence>
<evidence type="ECO:0000305" key="4"/>
<organismHost>
    <name type="scientific">Bacillus subtilis</name>
    <dbReference type="NCBI Taxonomy" id="1423"/>
</organismHost>
<sequence length="443" mass="50510">MSKLRVMSLFSGIGAFEAALRNIGVDYELIGFSEIDKYAIKSYCAIHNVSETLNVGDISKAKKDNIPYFDLLTSGFPCPTFSVAGGRDGMEYKCSNCSHEHLITYEDYKKGVKCPKCEAVSKAKDERGTLFFETALLAEEKKPKFVILENVKGLINSGNGQVLRIISETMNNIGYRIDLELLNSKFFNVPQNRERVYIIGIREDLVENEQWVVGQKRNDVLSKGKKRLQEINIKSFNFKWPLQDTVTKRLREILEDFVDEKYYLNEEKTKKLVEQLGTAPLQKQEVREPLMVGHVDLKGHDAIKRVYSPEGLSPTLTTMGGGHREPKIAEKQKEVRAVLTPEREEKRQNGRRFKENGEPAFTVNTIDRHGVAIGEYPKYKIRKLSPLECWRLQAFDDEDFEKAFAAGISNSQLYKQAGNSITVSVLESIFQELIHTYVNKESE</sequence>
<reference key="1">
    <citation type="journal article" date="1986" name="Gene">
        <title>DNA methyltransferase genes of Bacillus subtilis phages: comparison of their nucleotide sequences.</title>
        <authorList>
            <person name="Tran-Betcke A."/>
            <person name="Behrens B."/>
            <person name="Noyer-Weidner M."/>
            <person name="Trautner T.A."/>
        </authorList>
    </citation>
    <scope>NUCLEOTIDE SEQUENCE [GENOMIC DNA]</scope>
</reference>
<reference key="2">
    <citation type="journal article" date="1988" name="EMBO J.">
        <title>Sequential order of target-recognizing domains in multispecific DNA-methyltransferases.</title>
        <authorList>
            <person name="Wilke K."/>
            <person name="Rauhut E."/>
            <person name="Noyer-Weidner M."/>
            <person name="Lauster R."/>
            <person name="Pawlek B."/>
            <person name="Behrens B."/>
            <person name="Trautner T.A."/>
        </authorList>
    </citation>
    <scope>NUCLEOTIDE SEQUENCE [GENOMIC DNA] OF 1-91 AND 125-443</scope>
</reference>
<reference key="3">
    <citation type="journal article" date="2003" name="Nucleic Acids Res.">
        <title>A nomenclature for restriction enzymes, DNA methyltransferases, homing endonucleases and their genes.</title>
        <authorList>
            <person name="Roberts R.J."/>
            <person name="Belfort M."/>
            <person name="Bestor T."/>
            <person name="Bhagwat A.S."/>
            <person name="Bickle T.A."/>
            <person name="Bitinaite J."/>
            <person name="Blumenthal R.M."/>
            <person name="Degtyarev S.K."/>
            <person name="Dryden D.T."/>
            <person name="Dybvig K."/>
            <person name="Firman K."/>
            <person name="Gromova E.S."/>
            <person name="Gumport R.I."/>
            <person name="Halford S.E."/>
            <person name="Hattman S."/>
            <person name="Heitman J."/>
            <person name="Hornby D.P."/>
            <person name="Janulaitis A."/>
            <person name="Jeltsch A."/>
            <person name="Josephsen J."/>
            <person name="Kiss A."/>
            <person name="Klaenhammer T.R."/>
            <person name="Kobayashi I."/>
            <person name="Kong H."/>
            <person name="Krueger D.H."/>
            <person name="Lacks S."/>
            <person name="Marinus M.G."/>
            <person name="Miyahara M."/>
            <person name="Morgan R.D."/>
            <person name="Murray N.E."/>
            <person name="Nagaraja V."/>
            <person name="Piekarowicz A."/>
            <person name="Pingoud A."/>
            <person name="Raleigh E."/>
            <person name="Rao D.N."/>
            <person name="Reich N."/>
            <person name="Repin V.E."/>
            <person name="Selker E.U."/>
            <person name="Shaw P.C."/>
            <person name="Stein D.C."/>
            <person name="Stoddard B.L."/>
            <person name="Szybalski W."/>
            <person name="Trautner T.A."/>
            <person name="Van Etten J.L."/>
            <person name="Vitor J.M."/>
            <person name="Wilson G.G."/>
            <person name="Xu S.Y."/>
        </authorList>
    </citation>
    <scope>NOMENCLATURE</scope>
</reference>
<feature type="chain" id="PRO_0000087866" description="Orphan methyltransferase M.Phi3TI">
    <location>
        <begin position="1"/>
        <end position="443"/>
    </location>
</feature>
<feature type="domain" description="SAM-dependent MTase C5-type" evidence="1">
    <location>
        <begin position="4"/>
        <end position="440"/>
    </location>
</feature>
<feature type="active site" evidence="1 2">
    <location>
        <position position="78"/>
    </location>
</feature>
<feature type="sequence conflict" description="In Ref. 2; no nucleotide entry." evidence="4" ref="2">
    <original>I</original>
    <variation>V</variation>
    <location>
        <position position="40"/>
    </location>
</feature>
<feature type="sequence conflict" description="In Ref. 2; no nucleotide entry." evidence="4" ref="2">
    <original>V</original>
    <variation>L</variation>
    <location>
        <position position="196"/>
    </location>
</feature>
<accession>P68586</accession>
<accession>P05795</accession>
<proteinExistence type="inferred from homology"/>
<comment type="function">
    <text evidence="3 4">A methyltransferase that methylates C-1 within the sequences 5'-GGCC-3' and 5'-GCNGC-3' (PubMed:12654995). Modification confers resistance against restriction enzymes that recognize these sequences (Probable).</text>
</comment>
<comment type="catalytic activity">
    <reaction evidence="2">
        <text>a 2'-deoxycytidine in DNA + S-adenosyl-L-methionine = a 5-methyl-2'-deoxycytidine in DNA + S-adenosyl-L-homocysteine + H(+)</text>
        <dbReference type="Rhea" id="RHEA:13681"/>
        <dbReference type="Rhea" id="RHEA-COMP:11369"/>
        <dbReference type="Rhea" id="RHEA-COMP:11370"/>
        <dbReference type="ChEBI" id="CHEBI:15378"/>
        <dbReference type="ChEBI" id="CHEBI:57856"/>
        <dbReference type="ChEBI" id="CHEBI:59789"/>
        <dbReference type="ChEBI" id="CHEBI:85452"/>
        <dbReference type="ChEBI" id="CHEBI:85454"/>
        <dbReference type="EC" id="2.1.1.37"/>
    </reaction>
</comment>
<comment type="similarity">
    <text evidence="1">Belongs to the class I-like SAM-binding methyltransferase superfamily. C5-methyltransferase family.</text>
</comment>
<gene>
    <name type="primary">mtbP</name>
</gene>